<accession>Q12236</accession>
<accession>D6W1W8</accession>
<dbReference type="EC" id="2.7.11.1"/>
<dbReference type="EMBL" id="Z48149">
    <property type="protein sequence ID" value="CAA88162.1"/>
    <property type="molecule type" value="Genomic_DNA"/>
</dbReference>
<dbReference type="EMBL" id="Z74842">
    <property type="protein sequence ID" value="CAA99113.1"/>
    <property type="molecule type" value="Genomic_DNA"/>
</dbReference>
<dbReference type="EMBL" id="BK006948">
    <property type="protein sequence ID" value="DAA10684.1"/>
    <property type="molecule type" value="Genomic_DNA"/>
</dbReference>
<dbReference type="PIR" id="S51899">
    <property type="entry name" value="S51899"/>
</dbReference>
<dbReference type="RefSeq" id="NP_014541.1">
    <property type="nucleotide sequence ID" value="NM_001183354.1"/>
</dbReference>
<dbReference type="SMR" id="Q12236"/>
<dbReference type="BioGRID" id="34303">
    <property type="interactions" value="99"/>
</dbReference>
<dbReference type="DIP" id="DIP-6295N"/>
<dbReference type="FunCoup" id="Q12236">
    <property type="interactions" value="533"/>
</dbReference>
<dbReference type="IntAct" id="Q12236">
    <property type="interactions" value="23"/>
</dbReference>
<dbReference type="MINT" id="Q12236"/>
<dbReference type="STRING" id="4932.YOL100W"/>
<dbReference type="GlyGen" id="Q12236">
    <property type="glycosylation" value="2 sites"/>
</dbReference>
<dbReference type="iPTMnet" id="Q12236"/>
<dbReference type="PaxDb" id="4932-YOL100W"/>
<dbReference type="PeptideAtlas" id="Q12236"/>
<dbReference type="EnsemblFungi" id="YOL100W_mRNA">
    <property type="protein sequence ID" value="YOL100W"/>
    <property type="gene ID" value="YOL100W"/>
</dbReference>
<dbReference type="GeneID" id="854053"/>
<dbReference type="KEGG" id="sce:YOL100W"/>
<dbReference type="AGR" id="SGD:S000005460"/>
<dbReference type="SGD" id="S000005460">
    <property type="gene designation" value="PKH2"/>
</dbReference>
<dbReference type="VEuPathDB" id="FungiDB:YOL100W"/>
<dbReference type="eggNOG" id="KOG0592">
    <property type="taxonomic scope" value="Eukaryota"/>
</dbReference>
<dbReference type="GeneTree" id="ENSGT00940000155267"/>
<dbReference type="HOGENOM" id="CLU_005768_1_1_1"/>
<dbReference type="InParanoid" id="Q12236"/>
<dbReference type="OMA" id="VMKVQYA"/>
<dbReference type="OrthoDB" id="347657at2759"/>
<dbReference type="BioCyc" id="YEAST:G3O-33498-MONOMER"/>
<dbReference type="Reactome" id="R-SCE-114604">
    <property type="pathway name" value="GPVI-mediated activation cascade"/>
</dbReference>
<dbReference type="Reactome" id="R-SCE-1257604">
    <property type="pathway name" value="PIP3 activates AKT signaling"/>
</dbReference>
<dbReference type="Reactome" id="R-SCE-165158">
    <property type="pathway name" value="Activation of AKT2"/>
</dbReference>
<dbReference type="Reactome" id="R-SCE-202424">
    <property type="pathway name" value="Downstream TCR signaling"/>
</dbReference>
<dbReference type="Reactome" id="R-SCE-2730905">
    <property type="pathway name" value="Role of LAT2/NTAL/LAB on calcium mobilization"/>
</dbReference>
<dbReference type="Reactome" id="R-SCE-389357">
    <property type="pathway name" value="CD28 dependent PI3K/Akt signaling"/>
</dbReference>
<dbReference type="Reactome" id="R-SCE-392451">
    <property type="pathway name" value="G beta:gamma signalling through PI3Kgamma"/>
</dbReference>
<dbReference type="Reactome" id="R-SCE-5218920">
    <property type="pathway name" value="VEGFR2 mediated vascular permeability"/>
</dbReference>
<dbReference type="Reactome" id="R-SCE-5218921">
    <property type="pathway name" value="VEGFR2 mediated cell proliferation"/>
</dbReference>
<dbReference type="Reactome" id="R-SCE-5625740">
    <property type="pathway name" value="RHO GTPases activate PKNs"/>
</dbReference>
<dbReference type="Reactome" id="R-SCE-6804757">
    <property type="pathway name" value="Regulation of TP53 Degradation"/>
</dbReference>
<dbReference type="Reactome" id="R-SCE-9634635">
    <property type="pathway name" value="Estrogen-stimulated signaling through PRKCZ"/>
</dbReference>
<dbReference type="Reactome" id="R-SCE-9856530">
    <property type="pathway name" value="High laminar flow shear stress activates signaling by PIEZO1 and PECAM1:CDH5:KDR in endothelial cells"/>
</dbReference>
<dbReference type="BioGRID-ORCS" id="854053">
    <property type="hits" value="0 hits in 13 CRISPR screens"/>
</dbReference>
<dbReference type="PRO" id="PR:Q12236"/>
<dbReference type="Proteomes" id="UP000002311">
    <property type="component" value="Chromosome XV"/>
</dbReference>
<dbReference type="RNAct" id="Q12236">
    <property type="molecule type" value="protein"/>
</dbReference>
<dbReference type="GO" id="GO:0005938">
    <property type="term" value="C:cell cortex"/>
    <property type="evidence" value="ECO:0000314"/>
    <property type="project" value="SGD"/>
</dbReference>
<dbReference type="GO" id="GO:0005634">
    <property type="term" value="C:nucleus"/>
    <property type="evidence" value="ECO:0000314"/>
    <property type="project" value="SGD"/>
</dbReference>
<dbReference type="GO" id="GO:0005524">
    <property type="term" value="F:ATP binding"/>
    <property type="evidence" value="ECO:0007669"/>
    <property type="project" value="UniProtKB-KW"/>
</dbReference>
<dbReference type="GO" id="GO:0004672">
    <property type="term" value="F:protein kinase activity"/>
    <property type="evidence" value="ECO:0000314"/>
    <property type="project" value="SGD"/>
</dbReference>
<dbReference type="GO" id="GO:0106310">
    <property type="term" value="F:protein serine kinase activity"/>
    <property type="evidence" value="ECO:0007669"/>
    <property type="project" value="RHEA"/>
</dbReference>
<dbReference type="GO" id="GO:0004674">
    <property type="term" value="F:protein serine/threonine kinase activity"/>
    <property type="evidence" value="ECO:0000314"/>
    <property type="project" value="SGD"/>
</dbReference>
<dbReference type="GO" id="GO:0000196">
    <property type="term" value="P:cell integrity MAPK cascade"/>
    <property type="evidence" value="ECO:0000315"/>
    <property type="project" value="SGD"/>
</dbReference>
<dbReference type="GO" id="GO:0006897">
    <property type="term" value="P:endocytosis"/>
    <property type="evidence" value="ECO:0007669"/>
    <property type="project" value="UniProtKB-KW"/>
</dbReference>
<dbReference type="GO" id="GO:0035556">
    <property type="term" value="P:intracellular signal transduction"/>
    <property type="evidence" value="ECO:0000318"/>
    <property type="project" value="GO_Central"/>
</dbReference>
<dbReference type="GO" id="GO:0032511">
    <property type="term" value="P:late endosome to vacuole transport via multivesicular body sorting pathway"/>
    <property type="evidence" value="ECO:0000315"/>
    <property type="project" value="SGD"/>
</dbReference>
<dbReference type="GO" id="GO:0010606">
    <property type="term" value="P:positive regulation of cytoplasmic mRNA processing body assembly"/>
    <property type="evidence" value="ECO:0000316"/>
    <property type="project" value="SGD"/>
</dbReference>
<dbReference type="GO" id="GO:0060211">
    <property type="term" value="P:regulation of nuclear-transcribed mRNA poly(A) tail shortening"/>
    <property type="evidence" value="ECO:0000316"/>
    <property type="project" value="SGD"/>
</dbReference>
<dbReference type="CDD" id="cd05581">
    <property type="entry name" value="STKc_PDK1"/>
    <property type="match status" value="1"/>
</dbReference>
<dbReference type="FunFam" id="3.30.200.20:FF:000191">
    <property type="entry name" value="3-phosphoinositide-dependent protein kinase 2-like"/>
    <property type="match status" value="1"/>
</dbReference>
<dbReference type="FunFam" id="1.10.510.10:FF:000534">
    <property type="entry name" value="Serine/threonine-protein kinase PKH2"/>
    <property type="match status" value="1"/>
</dbReference>
<dbReference type="Gene3D" id="3.30.200.20">
    <property type="entry name" value="Phosphorylase Kinase, domain 1"/>
    <property type="match status" value="1"/>
</dbReference>
<dbReference type="Gene3D" id="1.10.510.10">
    <property type="entry name" value="Transferase(Phosphotransferase) domain 1"/>
    <property type="match status" value="1"/>
</dbReference>
<dbReference type="InterPro" id="IPR011009">
    <property type="entry name" value="Kinase-like_dom_sf"/>
</dbReference>
<dbReference type="InterPro" id="IPR039046">
    <property type="entry name" value="PDPK1"/>
</dbReference>
<dbReference type="InterPro" id="IPR000719">
    <property type="entry name" value="Prot_kinase_dom"/>
</dbReference>
<dbReference type="InterPro" id="IPR017441">
    <property type="entry name" value="Protein_kinase_ATP_BS"/>
</dbReference>
<dbReference type="InterPro" id="IPR008271">
    <property type="entry name" value="Ser/Thr_kinase_AS"/>
</dbReference>
<dbReference type="InterPro" id="IPR050236">
    <property type="entry name" value="Ser_Thr_kinase_AGC"/>
</dbReference>
<dbReference type="PANTHER" id="PTHR24356:SF163">
    <property type="entry name" value="3-PHOSPHOINOSITIDE-DEPENDENT PROTEIN KINASE 1-RELATED"/>
    <property type="match status" value="1"/>
</dbReference>
<dbReference type="PANTHER" id="PTHR24356">
    <property type="entry name" value="SERINE/THREONINE-PROTEIN KINASE"/>
    <property type="match status" value="1"/>
</dbReference>
<dbReference type="Pfam" id="PF00069">
    <property type="entry name" value="Pkinase"/>
    <property type="match status" value="1"/>
</dbReference>
<dbReference type="SMART" id="SM00220">
    <property type="entry name" value="S_TKc"/>
    <property type="match status" value="1"/>
</dbReference>
<dbReference type="SUPFAM" id="SSF56112">
    <property type="entry name" value="Protein kinase-like (PK-like)"/>
    <property type="match status" value="1"/>
</dbReference>
<dbReference type="PROSITE" id="PS00107">
    <property type="entry name" value="PROTEIN_KINASE_ATP"/>
    <property type="match status" value="1"/>
</dbReference>
<dbReference type="PROSITE" id="PS50011">
    <property type="entry name" value="PROTEIN_KINASE_DOM"/>
    <property type="match status" value="1"/>
</dbReference>
<dbReference type="PROSITE" id="PS00108">
    <property type="entry name" value="PROTEIN_KINASE_ST"/>
    <property type="match status" value="1"/>
</dbReference>
<proteinExistence type="evidence at protein level"/>
<keyword id="KW-0067">ATP-binding</keyword>
<keyword id="KW-0963">Cytoplasm</keyword>
<keyword id="KW-0254">Endocytosis</keyword>
<keyword id="KW-0418">Kinase</keyword>
<keyword id="KW-0547">Nucleotide-binding</keyword>
<keyword id="KW-0539">Nucleus</keyword>
<keyword id="KW-0597">Phosphoprotein</keyword>
<keyword id="KW-1185">Reference proteome</keyword>
<keyword id="KW-0723">Serine/threonine-protein kinase</keyword>
<keyword id="KW-0808">Transferase</keyword>
<reference key="1">
    <citation type="journal article" date="1995" name="Yeast">
        <title>Sequence analysis of a 44 kb DNA fragment of yeast chromosome XV including the Ty1-H3 retrotransposon, the suf1(+) frameshift suppressor gene for tRNA-Gly, the yeast transfer RNA-Thr-1a and a delta element.</title>
        <authorList>
            <person name="Vandenbol M."/>
            <person name="Durand P."/>
            <person name="Portetelle D."/>
            <person name="Hilger F."/>
        </authorList>
    </citation>
    <scope>NUCLEOTIDE SEQUENCE [GENOMIC DNA]</scope>
</reference>
<reference key="2">
    <citation type="journal article" date="1997" name="Nature">
        <title>The nucleotide sequence of Saccharomyces cerevisiae chromosome XV.</title>
        <authorList>
            <person name="Dujon B."/>
            <person name="Albermann K."/>
            <person name="Aldea M."/>
            <person name="Alexandraki D."/>
            <person name="Ansorge W."/>
            <person name="Arino J."/>
            <person name="Benes V."/>
            <person name="Bohn C."/>
            <person name="Bolotin-Fukuhara M."/>
            <person name="Bordonne R."/>
            <person name="Boyer J."/>
            <person name="Camasses A."/>
            <person name="Casamayor A."/>
            <person name="Casas C."/>
            <person name="Cheret G."/>
            <person name="Cziepluch C."/>
            <person name="Daignan-Fornier B."/>
            <person name="Dang V.-D."/>
            <person name="de Haan M."/>
            <person name="Delius H."/>
            <person name="Durand P."/>
            <person name="Fairhead C."/>
            <person name="Feldmann H."/>
            <person name="Gaillon L."/>
            <person name="Galisson F."/>
            <person name="Gamo F.-J."/>
            <person name="Gancedo C."/>
            <person name="Goffeau A."/>
            <person name="Goulding S.E."/>
            <person name="Grivell L.A."/>
            <person name="Habbig B."/>
            <person name="Hand N.J."/>
            <person name="Hani J."/>
            <person name="Hattenhorst U."/>
            <person name="Hebling U."/>
            <person name="Hernando Y."/>
            <person name="Herrero E."/>
            <person name="Heumann K."/>
            <person name="Hiesel R."/>
            <person name="Hilger F."/>
            <person name="Hofmann B."/>
            <person name="Hollenberg C.P."/>
            <person name="Hughes B."/>
            <person name="Jauniaux J.-C."/>
            <person name="Kalogeropoulos A."/>
            <person name="Katsoulou C."/>
            <person name="Kordes E."/>
            <person name="Lafuente M.J."/>
            <person name="Landt O."/>
            <person name="Louis E.J."/>
            <person name="Maarse A.C."/>
            <person name="Madania A."/>
            <person name="Mannhaupt G."/>
            <person name="Marck C."/>
            <person name="Martin R.P."/>
            <person name="Mewes H.-W."/>
            <person name="Michaux G."/>
            <person name="Paces V."/>
            <person name="Parle-McDermott A.G."/>
            <person name="Pearson B.M."/>
            <person name="Perrin A."/>
            <person name="Pettersson B."/>
            <person name="Poch O."/>
            <person name="Pohl T.M."/>
            <person name="Poirey R."/>
            <person name="Portetelle D."/>
            <person name="Pujol A."/>
            <person name="Purnelle B."/>
            <person name="Ramezani Rad M."/>
            <person name="Rechmann S."/>
            <person name="Schwager C."/>
            <person name="Schweizer M."/>
            <person name="Sor F."/>
            <person name="Sterky F."/>
            <person name="Tarassov I.A."/>
            <person name="Teodoru C."/>
            <person name="Tettelin H."/>
            <person name="Thierry A."/>
            <person name="Tobiasch E."/>
            <person name="Tzermia M."/>
            <person name="Uhlen M."/>
            <person name="Unseld M."/>
            <person name="Valens M."/>
            <person name="Vandenbol M."/>
            <person name="Vetter I."/>
            <person name="Vlcek C."/>
            <person name="Voet M."/>
            <person name="Volckaert G."/>
            <person name="Voss H."/>
            <person name="Wambutt R."/>
            <person name="Wedler H."/>
            <person name="Wiemann S."/>
            <person name="Winsor B."/>
            <person name="Wolfe K.H."/>
            <person name="Zollner A."/>
            <person name="Zumstein E."/>
            <person name="Kleine K."/>
        </authorList>
    </citation>
    <scope>NUCLEOTIDE SEQUENCE [LARGE SCALE GENOMIC DNA]</scope>
    <source>
        <strain>ATCC 204508 / S288c</strain>
    </source>
</reference>
<reference key="3">
    <citation type="journal article" date="2014" name="G3 (Bethesda)">
        <title>The reference genome sequence of Saccharomyces cerevisiae: Then and now.</title>
        <authorList>
            <person name="Engel S.R."/>
            <person name="Dietrich F.S."/>
            <person name="Fisk D.G."/>
            <person name="Binkley G."/>
            <person name="Balakrishnan R."/>
            <person name="Costanzo M.C."/>
            <person name="Dwight S.S."/>
            <person name="Hitz B.C."/>
            <person name="Karra K."/>
            <person name="Nash R.S."/>
            <person name="Weng S."/>
            <person name="Wong E.D."/>
            <person name="Lloyd P."/>
            <person name="Skrzypek M.S."/>
            <person name="Miyasato S.R."/>
            <person name="Simison M."/>
            <person name="Cherry J.M."/>
        </authorList>
    </citation>
    <scope>GENOME REANNOTATION</scope>
    <source>
        <strain>ATCC 204508 / S288c</strain>
    </source>
</reference>
<reference key="4">
    <citation type="journal article" date="1999" name="Curr. Biol.">
        <title>Functional counterparts of mammalian protein kinases PDK1 and SGK in budding yeast.</title>
        <authorList>
            <person name="Casamayor A."/>
            <person name="Torrance P.D."/>
            <person name="Kobayashi T."/>
            <person name="Thorner J."/>
            <person name="Alessi D.R."/>
        </authorList>
    </citation>
    <scope>FUNCTION</scope>
</reference>
<reference key="5">
    <citation type="journal article" date="1999" name="Mol. Cell. Biol.">
        <title>PDK1 homologs activate the Pkc1-mitogen-activated protein kinase pathway in yeast.</title>
        <authorList>
            <person name="Inagaki M."/>
            <person name="Schmelzle T."/>
            <person name="Yamaguchi K."/>
            <person name="Irie K."/>
            <person name="Hall M.N."/>
            <person name="Matsumoto K."/>
        </authorList>
    </citation>
    <scope>FUNCTION</scope>
</reference>
<reference key="6">
    <citation type="journal article" date="2001" name="EMBO J.">
        <title>Sphingoid base signaling via Pkh kinases is required for endocytosis in yeast.</title>
        <authorList>
            <person name="Friant S."/>
            <person name="Lombardi R."/>
            <person name="Schmelzle T."/>
            <person name="Hall M.N."/>
            <person name="Riezman H."/>
        </authorList>
    </citation>
    <scope>FUNCTION</scope>
    <scope>ACTIVITY REGULATION</scope>
</reference>
<reference key="7">
    <citation type="journal article" date="2002" name="Mol. Biol. Cell">
        <title>Pkh1 and Pkh2 differentially phosphorylate and activate Ypk1 and Ykr2 and define protein kinase modules required for maintenance of cell wall integrity.</title>
        <authorList>
            <person name="Roelants F.M."/>
            <person name="Torrance P.D."/>
            <person name="Bezman N."/>
            <person name="Thorner J."/>
        </authorList>
    </citation>
    <scope>FUNCTION</scope>
    <scope>SUBCELLULAR LOCATION</scope>
</reference>
<reference key="8">
    <citation type="journal article" date="2004" name="Microbiology">
        <title>Differential roles of PDK1- and PDK2-phosphorylation sites in the yeast AGC kinases Ypk1, Pkc1 and Sch9.</title>
        <authorList>
            <person name="Roelants F.M."/>
            <person name="Torrance P.D."/>
            <person name="Thorner J."/>
        </authorList>
    </citation>
    <scope>FUNCTION</scope>
</reference>
<reference key="9">
    <citation type="journal article" date="2007" name="EMBO J.">
        <title>Pkh-kinases control eisosome assembly and organization.</title>
        <authorList>
            <person name="Walther T.C."/>
            <person name="Aguilar P.S."/>
            <person name="Frohlich F."/>
            <person name="Chu F."/>
            <person name="Moreira K."/>
            <person name="Burlingame A.L."/>
            <person name="Walter P."/>
        </authorList>
    </citation>
    <scope>FUNCTION</scope>
    <scope>SUBCELLULAR LOCATION</scope>
</reference>
<reference key="10">
    <citation type="journal article" date="2007" name="J. Proteome Res.">
        <title>Large-scale phosphorylation analysis of alpha-factor-arrested Saccharomyces cerevisiae.</title>
        <authorList>
            <person name="Li X."/>
            <person name="Gerber S.A."/>
            <person name="Rudner A.D."/>
            <person name="Beausoleil S.A."/>
            <person name="Haas W."/>
            <person name="Villen J."/>
            <person name="Elias J.E."/>
            <person name="Gygi S.P."/>
        </authorList>
    </citation>
    <scope>PHOSPHORYLATION [LARGE SCALE ANALYSIS] AT SER-1009</scope>
    <scope>IDENTIFICATION BY MASS SPECTROMETRY [LARGE SCALE ANALYSIS]</scope>
    <source>
        <strain>ADR376</strain>
    </source>
</reference>
<reference key="11">
    <citation type="journal article" date="2007" name="Proc. Natl. Acad. Sci. U.S.A.">
        <title>Analysis of phosphorylation sites on proteins from Saccharomyces cerevisiae by electron transfer dissociation (ETD) mass spectrometry.</title>
        <authorList>
            <person name="Chi A."/>
            <person name="Huttenhower C."/>
            <person name="Geer L.Y."/>
            <person name="Coon J.J."/>
            <person name="Syka J.E.P."/>
            <person name="Bai D.L."/>
            <person name="Shabanowitz J."/>
            <person name="Burke D.J."/>
            <person name="Troyanskaya O.G."/>
            <person name="Hunt D.F."/>
        </authorList>
    </citation>
    <scope>IDENTIFICATION BY MASS SPECTROMETRY [LARGE SCALE ANALYSIS]</scope>
</reference>
<reference key="12">
    <citation type="journal article" date="2008" name="Mol. Cell. Proteomics">
        <title>A multidimensional chromatography technology for in-depth phosphoproteome analysis.</title>
        <authorList>
            <person name="Albuquerque C.P."/>
            <person name="Smolka M.B."/>
            <person name="Payne S.H."/>
            <person name="Bafna V."/>
            <person name="Eng J."/>
            <person name="Zhou H."/>
        </authorList>
    </citation>
    <scope>IDENTIFICATION BY MASS SPECTROMETRY [LARGE SCALE ANALYSIS]</scope>
</reference>
<reference key="13">
    <citation type="journal article" date="2009" name="Science">
        <title>Global analysis of Cdk1 substrate phosphorylation sites provides insights into evolution.</title>
        <authorList>
            <person name="Holt L.J."/>
            <person name="Tuch B.B."/>
            <person name="Villen J."/>
            <person name="Johnson A.D."/>
            <person name="Gygi S.P."/>
            <person name="Morgan D.O."/>
        </authorList>
    </citation>
    <scope>PHOSPHORYLATION [LARGE SCALE ANALYSIS] AT SER-138; SER-619 AND SER-1009</scope>
    <scope>IDENTIFICATION BY MASS SPECTROMETRY [LARGE SCALE ANALYSIS]</scope>
</reference>
<reference key="14">
    <citation type="journal article" date="2011" name="J. Biol. Chem.">
        <title>Nutrients and the Pkh1/2 and Pkc1 protein kinases control mRNA decay and P-body assembly in Yeast.</title>
        <authorList>
            <person name="Luo G."/>
            <person name="Costanzo M."/>
            <person name="Boone C."/>
            <person name="Dickson R.C."/>
        </authorList>
    </citation>
    <scope>FUNCTION</scope>
</reference>
<reference key="15">
    <citation type="journal article" date="2012" name="Proc. Natl. Acad. Sci. U.S.A.">
        <title>N-terminal acetylome analyses and functional insights of the N-terminal acetyltransferase NatB.</title>
        <authorList>
            <person name="Van Damme P."/>
            <person name="Lasa M."/>
            <person name="Polevoda B."/>
            <person name="Gazquez C."/>
            <person name="Elosegui-Artola A."/>
            <person name="Kim D.S."/>
            <person name="De Juan-Pardo E."/>
            <person name="Demeyer K."/>
            <person name="Hole K."/>
            <person name="Larrea E."/>
            <person name="Timmerman E."/>
            <person name="Prieto J."/>
            <person name="Arnesen T."/>
            <person name="Sherman F."/>
            <person name="Gevaert K."/>
            <person name="Aldabe R."/>
        </authorList>
    </citation>
    <scope>IDENTIFICATION BY MASS SPECTROMETRY [LARGE SCALE ANALYSIS]</scope>
</reference>
<reference key="16">
    <citation type="journal article" date="2013" name="ACS Chem. Biol.">
        <title>PIF-pocket as a target for C. albicans Pkh selective inhibitors.</title>
        <authorList>
            <person name="Pastor-Flores D."/>
            <person name="Schulze J.O."/>
            <person name="Bahi A."/>
            <person name="Giacometti R."/>
            <person name="Ferrer-Dalmau J."/>
            <person name="Passeron S."/>
            <person name="Engel M."/>
            <person name="Suss E."/>
            <person name="Casamayor A."/>
            <person name="Biondi R.M."/>
        </authorList>
    </citation>
    <scope>DISRUPTION PHENOTYPE</scope>
</reference>
<feature type="chain" id="PRO_0000086158" description="Serine/threonine-protein kinase PKH2">
    <location>
        <begin position="1"/>
        <end position="1081"/>
    </location>
</feature>
<feature type="domain" description="Protein kinase" evidence="2">
    <location>
        <begin position="179"/>
        <end position="443"/>
    </location>
</feature>
<feature type="region of interest" description="PIF-pocket" evidence="1">
    <location>
        <begin position="210"/>
        <end position="255"/>
    </location>
</feature>
<feature type="region of interest" description="Disordered" evidence="4">
    <location>
        <begin position="494"/>
        <end position="652"/>
    </location>
</feature>
<feature type="region of interest" description="Disordered" evidence="4">
    <location>
        <begin position="805"/>
        <end position="833"/>
    </location>
</feature>
<feature type="region of interest" description="Disordered" evidence="4">
    <location>
        <begin position="970"/>
        <end position="1017"/>
    </location>
</feature>
<feature type="compositionally biased region" description="Polar residues" evidence="4">
    <location>
        <begin position="494"/>
        <end position="526"/>
    </location>
</feature>
<feature type="compositionally biased region" description="Basic and acidic residues" evidence="4">
    <location>
        <begin position="527"/>
        <end position="538"/>
    </location>
</feature>
<feature type="compositionally biased region" description="Low complexity" evidence="4">
    <location>
        <begin position="564"/>
        <end position="575"/>
    </location>
</feature>
<feature type="compositionally biased region" description="Low complexity" evidence="4">
    <location>
        <begin position="582"/>
        <end position="602"/>
    </location>
</feature>
<feature type="compositionally biased region" description="Pro residues" evidence="4">
    <location>
        <begin position="632"/>
        <end position="645"/>
    </location>
</feature>
<feature type="compositionally biased region" description="Polar residues" evidence="4">
    <location>
        <begin position="805"/>
        <end position="819"/>
    </location>
</feature>
<feature type="compositionally biased region" description="Polar residues" evidence="4">
    <location>
        <begin position="998"/>
        <end position="1017"/>
    </location>
</feature>
<feature type="active site" description="Proton acceptor" evidence="2 3">
    <location>
        <position position="303"/>
    </location>
</feature>
<feature type="binding site" evidence="1">
    <location>
        <begin position="189"/>
        <end position="191"/>
    </location>
    <ligand>
        <name>ATP</name>
        <dbReference type="ChEBI" id="CHEBI:30616"/>
    </ligand>
</feature>
<feature type="binding site" evidence="1">
    <location>
        <position position="208"/>
    </location>
    <ligand>
        <name>ATP</name>
        <dbReference type="ChEBI" id="CHEBI:30616"/>
    </ligand>
</feature>
<feature type="binding site" evidence="1">
    <location>
        <begin position="258"/>
        <end position="260"/>
    </location>
    <ligand>
        <name>ATP</name>
        <dbReference type="ChEBI" id="CHEBI:30616"/>
    </ligand>
</feature>
<feature type="binding site" evidence="1">
    <location>
        <position position="264"/>
    </location>
    <ligand>
        <name>ATP</name>
        <dbReference type="ChEBI" id="CHEBI:30616"/>
    </ligand>
</feature>
<feature type="binding site" evidence="1">
    <location>
        <position position="307"/>
    </location>
    <ligand>
        <name>ATP</name>
        <dbReference type="ChEBI" id="CHEBI:30616"/>
    </ligand>
</feature>
<feature type="binding site" evidence="1">
    <location>
        <position position="321"/>
    </location>
    <ligand>
        <name>ATP</name>
        <dbReference type="ChEBI" id="CHEBI:30616"/>
    </ligand>
</feature>
<feature type="modified residue" description="Phosphoserine" evidence="15">
    <location>
        <position position="138"/>
    </location>
</feature>
<feature type="modified residue" description="Phosphoserine" evidence="15">
    <location>
        <position position="619"/>
    </location>
</feature>
<feature type="modified residue" description="Phosphoserine" evidence="14 15">
    <location>
        <position position="1009"/>
    </location>
</feature>
<comment type="function">
    <text evidence="5 6 7 8 9 10 11">Serine/threonine-protein kinase which is part sphingolipid-mediated signaling pathway that is required for the internalization step of endocytosis by regulating eisosome assembly and organization, and modulating the organization of the plasma membrane. Phosphorylates and activates PKC1. Activates YPK1 and YPK2, 2 components of signaling cascade required for maintenance of cell wall integrity. Required for stress-induced P-body assembly and regulates global mRNA decay at the deadenylation step.</text>
</comment>
<comment type="catalytic activity">
    <reaction>
        <text>L-seryl-[protein] + ATP = O-phospho-L-seryl-[protein] + ADP + H(+)</text>
        <dbReference type="Rhea" id="RHEA:17989"/>
        <dbReference type="Rhea" id="RHEA-COMP:9863"/>
        <dbReference type="Rhea" id="RHEA-COMP:11604"/>
        <dbReference type="ChEBI" id="CHEBI:15378"/>
        <dbReference type="ChEBI" id="CHEBI:29999"/>
        <dbReference type="ChEBI" id="CHEBI:30616"/>
        <dbReference type="ChEBI" id="CHEBI:83421"/>
        <dbReference type="ChEBI" id="CHEBI:456216"/>
        <dbReference type="EC" id="2.7.11.1"/>
    </reaction>
</comment>
<comment type="catalytic activity">
    <reaction>
        <text>L-threonyl-[protein] + ATP = O-phospho-L-threonyl-[protein] + ADP + H(+)</text>
        <dbReference type="Rhea" id="RHEA:46608"/>
        <dbReference type="Rhea" id="RHEA-COMP:11060"/>
        <dbReference type="Rhea" id="RHEA-COMP:11605"/>
        <dbReference type="ChEBI" id="CHEBI:15378"/>
        <dbReference type="ChEBI" id="CHEBI:30013"/>
        <dbReference type="ChEBI" id="CHEBI:30616"/>
        <dbReference type="ChEBI" id="CHEBI:61977"/>
        <dbReference type="ChEBI" id="CHEBI:456216"/>
        <dbReference type="EC" id="2.7.11.1"/>
    </reaction>
</comment>
<comment type="activity regulation">
    <text evidence="7">Sphingoid base activates kinase activity.</text>
</comment>
<comment type="subcellular location">
    <subcellularLocation>
        <location>Nucleus</location>
    </subcellularLocation>
    <subcellularLocation>
        <location>Cytoplasm</location>
        <location>Cell cortex</location>
    </subcellularLocation>
    <text>Localizes at eisosomes, large, immobile complexes that mark sites of endocytosis near the plasma membrane.</text>
</comment>
<comment type="domain">
    <text evidence="1">The PIF-pocket is a small lobe in the catalytic domain required by the enzyme for the binding to the hydrophobic motif of its substrates. It is an allosteric regulatory site that can accommodate small compounds acting as allosteric inhibitors.</text>
</comment>
<comment type="disruption phenotype">
    <text evidence="12">Long-term depletion of PKH2 in a PKH1 null mutant (Pkh depletion) induces programmed cell death. This is mediated by the lack of Pkh-dependent activation of the PKC1 downstream signaling cascade and results in accumulation of reactive oxygen species (ROS) and DNA fragmentation.</text>
</comment>
<comment type="similarity">
    <text evidence="13">Belongs to the protein kinase superfamily. AGC Ser/Thr protein kinase family. PDPK1 subfamily.</text>
</comment>
<sequence>MYFDKDNSMSPRPLLPSDEQKLNINLLTKKEKFSHLDPHYDAKATPQRSTSNRNVGDLLLEKRTAKPMIQKALTNTDNFIEMYHNQQRKNLDDDTIKEVMINDENGKTVASTNDGRYDNDYDNNDINDQKTLDNIAGSPHMEKNRNKVKIEHDSSSQKPIAKESSKAQKNIIKKGIKDFKFGSVIGDGAYSTVMLATSIDTKKRYAAKVLNKEYLIRQKKVKYVSIEKTALQKLNNSPSVVRLFSTFQDESSLYFLLEYAPNGDFLSLMKKYGSLDETCARYYAAQIIDAIDYLHSNGIIHRDIKPENILLDGEMKIKLTDFGTAKLLNPTNNSVSKPEYDLSTRSKSFVGTAEYVSPELLNDSFTDYRCDIWAFGCILFQMIAGKPPFKATNEYLTFQKVMKVQYAFTPGFPLIIRDLVKKILVKNLDRRLTISQIKEHHFFKDLNFKDGSVWSKTPPEIKPYKINAKSMQAMPSGSDRKLVKKSVNTLGKSHLVTQRSASSPSVEETTHSTLYNNNTHASTESEISIKKRPTDERTAQILENARKGINNRKNQPGKRTPSGAASAALAASAALTKKTMQSYPTSSSKSSRSSSPATTSRPGTYKRTSSTESKPFAKSPPLSASVLSSKVPMPPYTPPMSPPMTPYDTYQMTPPYTTKQQDYSDTAIAAPKPCISKQNVKNSTDSPLMNKQDIQWSFYLKNINEHVLRTEKLDFVTTNYDILEKKMLKLNGSLLDPQLFGKPRHTFLSQVARSGGEVTGFRNDPTMTAYSKTEDTYYSKNIIDLQLLEDDYRIEGGDLSELLTNRSGEGYKCNQNSSPMKDDDKSESNNKGSSVFSGKIKKLFHPTSAAETLSSSDEKTKYYKRTIVMTSFGRFLVFAKRRQPNPVTNLKYELEYDINLRQQGTKIKELIIPLEMGTNHIVVIQTPYKSFLLSTDKKTTSKLFTVLKKILNSNTNKIEKELLQRNQKVIERRTSSSGRAIPKDLPTSKSPSPKPRTHSQSPSISKHNSFSESINSAKSNRSSRIFETFINAKEQNSKKHAAPVPLTSKLVNGLPKRQVTVGLGLNTGTNFKNSSAKSKRS</sequence>
<evidence type="ECO:0000250" key="1">
    <source>
        <dbReference type="UniProtKB" id="O15530"/>
    </source>
</evidence>
<evidence type="ECO:0000255" key="2">
    <source>
        <dbReference type="PROSITE-ProRule" id="PRU00159"/>
    </source>
</evidence>
<evidence type="ECO:0000255" key="3">
    <source>
        <dbReference type="PROSITE-ProRule" id="PRU10027"/>
    </source>
</evidence>
<evidence type="ECO:0000256" key="4">
    <source>
        <dbReference type="SAM" id="MobiDB-lite"/>
    </source>
</evidence>
<evidence type="ECO:0000269" key="5">
    <source>
    </source>
</evidence>
<evidence type="ECO:0000269" key="6">
    <source>
    </source>
</evidence>
<evidence type="ECO:0000269" key="7">
    <source>
    </source>
</evidence>
<evidence type="ECO:0000269" key="8">
    <source>
    </source>
</evidence>
<evidence type="ECO:0000269" key="9">
    <source>
    </source>
</evidence>
<evidence type="ECO:0000269" key="10">
    <source>
    </source>
</evidence>
<evidence type="ECO:0000269" key="11">
    <source>
    </source>
</evidence>
<evidence type="ECO:0000269" key="12">
    <source>
    </source>
</evidence>
<evidence type="ECO:0000305" key="13"/>
<evidence type="ECO:0007744" key="14">
    <source>
    </source>
</evidence>
<evidence type="ECO:0007744" key="15">
    <source>
    </source>
</evidence>
<gene>
    <name type="primary">PKH2</name>
    <name type="ordered locus">YOL100W</name>
    <name type="ORF">HRC1081</name>
</gene>
<name>PKH2_YEAST</name>
<protein>
    <recommendedName>
        <fullName>Serine/threonine-protein kinase PKH2</fullName>
        <ecNumber>2.7.11.1</ecNumber>
    </recommendedName>
    <alternativeName>
        <fullName>PKB-activating kinase homolog 2</fullName>
    </alternativeName>
</protein>
<organism>
    <name type="scientific">Saccharomyces cerevisiae (strain ATCC 204508 / S288c)</name>
    <name type="common">Baker's yeast</name>
    <dbReference type="NCBI Taxonomy" id="559292"/>
    <lineage>
        <taxon>Eukaryota</taxon>
        <taxon>Fungi</taxon>
        <taxon>Dikarya</taxon>
        <taxon>Ascomycota</taxon>
        <taxon>Saccharomycotina</taxon>
        <taxon>Saccharomycetes</taxon>
        <taxon>Saccharomycetales</taxon>
        <taxon>Saccharomycetaceae</taxon>
        <taxon>Saccharomyces</taxon>
    </lineage>
</organism>